<keyword id="KW-0025">Alternative splicing</keyword>
<keyword id="KW-0075">B-cell activation</keyword>
<keyword id="KW-0202">Cytokine</keyword>
<keyword id="KW-1015">Disulfide bond</keyword>
<keyword id="KW-0325">Glycoprotein</keyword>
<keyword id="KW-0339">Growth factor</keyword>
<keyword id="KW-1185">Reference proteome</keyword>
<keyword id="KW-0964">Secreted</keyword>
<keyword id="KW-0732">Signal</keyword>
<sequence>MGLTSQLLPPLFFLLACAGNFVHGHKCDITLQEIIKTLNSLTEQKTLCTELTVTDIFAASKNTTEKETFCRAATVLRQFYSHHEKDTRCLGATAQQFHRHKQLIRFLKRLDRNLWGLAGLNSCPVKEANQSTLENFLERLKTIMREKYSKCSS</sequence>
<proteinExistence type="evidence at transcript level"/>
<comment type="function">
    <text evidence="2">Participates in at least several B-cell activation processes as well as of other cell types. It is a costimulator of DNA-synthesis. It induces the expression of class II MHC molecules on resting B-cells. It enhances both secretion and cell surface expression of IgE and IgG1. It also regulates the expression of the low affinity Fc receptor for IgE (CD23) on both lymphocytes and monocytes. Positively regulates IL31RA expression in macrophages. Stimulates autophagy in dendritic cells by interfering with mTORC1 signaling and through the induction of RUFY4.</text>
</comment>
<comment type="subcellular location">
    <subcellularLocation>
        <location evidence="1">Secreted</location>
    </subcellularLocation>
</comment>
<comment type="alternative products">
    <event type="alternative splicing"/>
    <isoform>
        <id>Q8HYB1-1</id>
        <name>1</name>
        <name>Long</name>
        <sequence type="displayed"/>
    </isoform>
    <isoform>
        <id>Q8HYB1-2</id>
        <name>2</name>
        <name>Short</name>
        <name>IL-4delta2</name>
        <sequence type="described" ref="VSP_009090"/>
    </isoform>
</comment>
<comment type="similarity">
    <text evidence="5">Belongs to the IL-4/IL-13 family.</text>
</comment>
<name>IL4_PANTR</name>
<gene>
    <name type="primary">IL4</name>
</gene>
<reference key="1">
    <citation type="journal article" date="2002" name="Immunogenetics">
        <title>Cloning of interleukin-4 delta2 splice variant (IL-4delta2) in chimpanzee and cynomolgus macaque: phylogenetic analysis of delta2 splice variant appearance, and implications for the study of IL-4-driven immune processes.</title>
        <authorList>
            <person name="Gautherot I."/>
            <person name="Burdin N."/>
            <person name="Seguin D."/>
            <person name="Aujame L."/>
            <person name="Sodoyer R."/>
        </authorList>
    </citation>
    <scope>NUCLEOTIDE SEQUENCE [MRNA] (ISOFORMS 1 AND 2)</scope>
</reference>
<reference key="2">
    <citation type="submission" date="2003-11" db="EMBL/GenBank/DDBJ databases">
        <title>Pan troglodytes genomic region including interleukin 13 (IL13) gene and interleukin 4 (IL4) gene.</title>
        <authorList>
            <person name="Sakagami T."/>
            <person name="Nakajima T."/>
            <person name="Saito N."/>
            <person name="Hayasaka I."/>
            <person name="Inoue I."/>
        </authorList>
    </citation>
    <scope>NUCLEOTIDE SEQUENCE [GENOMIC DNA]</scope>
</reference>
<dbReference type="EMBL" id="AY130260">
    <property type="protein sequence ID" value="AAN06594.1"/>
    <property type="molecule type" value="mRNA"/>
</dbReference>
<dbReference type="EMBL" id="AY130261">
    <property type="protein sequence ID" value="AAN06595.1"/>
    <property type="molecule type" value="mRNA"/>
</dbReference>
<dbReference type="EMBL" id="AY480012">
    <property type="protein sequence ID" value="AAR32990.1"/>
    <property type="molecule type" value="Genomic_DNA"/>
</dbReference>
<dbReference type="RefSeq" id="NP_001008993.1">
    <molecule id="Q8HYB1-2"/>
    <property type="nucleotide sequence ID" value="NM_001008993.1"/>
</dbReference>
<dbReference type="RefSeq" id="NP_001011714.1">
    <property type="nucleotide sequence ID" value="NM_001011714.1"/>
</dbReference>
<dbReference type="BMRB" id="Q8HYB1"/>
<dbReference type="SMR" id="Q8HYB1"/>
<dbReference type="FunCoup" id="Q8HYB1">
    <property type="interactions" value="876"/>
</dbReference>
<dbReference type="STRING" id="9598.ENSPTRP00000029464"/>
<dbReference type="GlyCosmos" id="Q8HYB1">
    <property type="glycosylation" value="2 sites, No reported glycans"/>
</dbReference>
<dbReference type="PaxDb" id="9598-ENSPTRP00000029464"/>
<dbReference type="GeneID" id="449565"/>
<dbReference type="KEGG" id="ptr:449565"/>
<dbReference type="CTD" id="3565"/>
<dbReference type="eggNOG" id="KOG3886">
    <property type="taxonomic scope" value="Eukaryota"/>
</dbReference>
<dbReference type="InParanoid" id="Q8HYB1"/>
<dbReference type="OrthoDB" id="16807at9604"/>
<dbReference type="TreeFam" id="TF336383"/>
<dbReference type="Proteomes" id="UP000002277">
    <property type="component" value="Unplaced"/>
</dbReference>
<dbReference type="GO" id="GO:0005615">
    <property type="term" value="C:extracellular space"/>
    <property type="evidence" value="ECO:0007669"/>
    <property type="project" value="UniProtKB-KW"/>
</dbReference>
<dbReference type="GO" id="GO:0005125">
    <property type="term" value="F:cytokine activity"/>
    <property type="evidence" value="ECO:0007669"/>
    <property type="project" value="UniProtKB-KW"/>
</dbReference>
<dbReference type="GO" id="GO:0008083">
    <property type="term" value="F:growth factor activity"/>
    <property type="evidence" value="ECO:0007669"/>
    <property type="project" value="UniProtKB-KW"/>
</dbReference>
<dbReference type="GO" id="GO:0005136">
    <property type="term" value="F:interleukin-4 receptor binding"/>
    <property type="evidence" value="ECO:0007669"/>
    <property type="project" value="InterPro"/>
</dbReference>
<dbReference type="GO" id="GO:0042113">
    <property type="term" value="P:B cell activation"/>
    <property type="evidence" value="ECO:0007669"/>
    <property type="project" value="UniProtKB-KW"/>
</dbReference>
<dbReference type="GO" id="GO:0006955">
    <property type="term" value="P:immune response"/>
    <property type="evidence" value="ECO:0007669"/>
    <property type="project" value="InterPro"/>
</dbReference>
<dbReference type="GO" id="GO:0035771">
    <property type="term" value="P:interleukin-4-mediated signaling pathway"/>
    <property type="evidence" value="ECO:0000318"/>
    <property type="project" value="GO_Central"/>
</dbReference>
<dbReference type="GO" id="GO:0050728">
    <property type="term" value="P:negative regulation of inflammatory response"/>
    <property type="evidence" value="ECO:0000318"/>
    <property type="project" value="GO_Central"/>
</dbReference>
<dbReference type="GO" id="GO:0045893">
    <property type="term" value="P:positive regulation of DNA-templated transcription"/>
    <property type="evidence" value="ECO:0000318"/>
    <property type="project" value="GO_Central"/>
</dbReference>
<dbReference type="GO" id="GO:0016239">
    <property type="term" value="P:positive regulation of macroautophagy"/>
    <property type="evidence" value="ECO:0000250"/>
    <property type="project" value="UniProtKB"/>
</dbReference>
<dbReference type="GO" id="GO:0050776">
    <property type="term" value="P:regulation of immune response"/>
    <property type="evidence" value="ECO:0000318"/>
    <property type="project" value="GO_Central"/>
</dbReference>
<dbReference type="FunFam" id="1.20.1250.10:FF:000014">
    <property type="entry name" value="Interleukin-4"/>
    <property type="match status" value="1"/>
</dbReference>
<dbReference type="Gene3D" id="1.20.1250.10">
    <property type="match status" value="1"/>
</dbReference>
<dbReference type="InterPro" id="IPR009079">
    <property type="entry name" value="4_helix_cytokine-like_core"/>
</dbReference>
<dbReference type="InterPro" id="IPR002354">
    <property type="entry name" value="IL-4"/>
</dbReference>
<dbReference type="InterPro" id="IPR001325">
    <property type="entry name" value="IL-4/IL-13"/>
</dbReference>
<dbReference type="InterPro" id="IPR018096">
    <property type="entry name" value="IL-4/IL-13_CS"/>
</dbReference>
<dbReference type="PANTHER" id="PTHR47401">
    <property type="entry name" value="INTERLEUKIN-4"/>
    <property type="match status" value="1"/>
</dbReference>
<dbReference type="PANTHER" id="PTHR47401:SF1">
    <property type="entry name" value="INTERLEUKIN-4"/>
    <property type="match status" value="1"/>
</dbReference>
<dbReference type="Pfam" id="PF00727">
    <property type="entry name" value="IL4"/>
    <property type="match status" value="1"/>
</dbReference>
<dbReference type="PIRSF" id="PIRSF001941">
    <property type="entry name" value="Interleukin_4"/>
    <property type="match status" value="1"/>
</dbReference>
<dbReference type="PRINTS" id="PR00431">
    <property type="entry name" value="INTERLEUKIN4"/>
</dbReference>
<dbReference type="SMART" id="SM00190">
    <property type="entry name" value="IL4_13"/>
    <property type="match status" value="1"/>
</dbReference>
<dbReference type="SUPFAM" id="SSF47266">
    <property type="entry name" value="4-helical cytokines"/>
    <property type="match status" value="1"/>
</dbReference>
<dbReference type="PROSITE" id="PS00838">
    <property type="entry name" value="INTERLEUKIN_4_13"/>
    <property type="match status" value="1"/>
</dbReference>
<evidence type="ECO:0000250" key="1"/>
<evidence type="ECO:0000250" key="2">
    <source>
        <dbReference type="UniProtKB" id="P07750"/>
    </source>
</evidence>
<evidence type="ECO:0000255" key="3"/>
<evidence type="ECO:0000303" key="4">
    <source>
    </source>
</evidence>
<evidence type="ECO:0000305" key="5"/>
<feature type="signal peptide" evidence="1">
    <location>
        <begin position="1"/>
        <end position="24"/>
    </location>
</feature>
<feature type="chain" id="PRO_0000015539" description="Interleukin-4">
    <location>
        <begin position="25"/>
        <end position="153"/>
    </location>
</feature>
<feature type="glycosylation site" description="N-linked (GlcNAc...) asparagine" evidence="3">
    <location>
        <position position="62"/>
    </location>
</feature>
<feature type="glycosylation site" description="N-linked (GlcNAc...) asparagine" evidence="3">
    <location>
        <position position="129"/>
    </location>
</feature>
<feature type="disulfide bond" evidence="1">
    <location>
        <begin position="27"/>
        <end position="151"/>
    </location>
</feature>
<feature type="disulfide bond" evidence="1">
    <location>
        <begin position="48"/>
        <end position="89"/>
    </location>
</feature>
<feature type="disulfide bond" evidence="1">
    <location>
        <begin position="70"/>
        <end position="123"/>
    </location>
</feature>
<feature type="splice variant" id="VSP_009090" description="In isoform 2." evidence="4">
    <location>
        <begin position="46"/>
        <end position="61"/>
    </location>
</feature>
<feature type="sequence conflict" description="In Ref. 2; AAR32990." evidence="5" ref="2">
    <original>E</original>
    <variation>K</variation>
    <location>
        <position position="50"/>
    </location>
</feature>
<feature type="sequence conflict" description="In Ref. 1; AAN06594." evidence="5" ref="1">
    <original>A</original>
    <variation>T</variation>
    <location>
        <position position="128"/>
    </location>
</feature>
<feature type="sequence conflict" description="In Ref. 2; AAR32990." evidence="5" ref="2">
    <original>N</original>
    <variation>D</variation>
    <location>
        <position position="135"/>
    </location>
</feature>
<organism>
    <name type="scientific">Pan troglodytes</name>
    <name type="common">Chimpanzee</name>
    <dbReference type="NCBI Taxonomy" id="9598"/>
    <lineage>
        <taxon>Eukaryota</taxon>
        <taxon>Metazoa</taxon>
        <taxon>Chordata</taxon>
        <taxon>Craniata</taxon>
        <taxon>Vertebrata</taxon>
        <taxon>Euteleostomi</taxon>
        <taxon>Mammalia</taxon>
        <taxon>Eutheria</taxon>
        <taxon>Euarchontoglires</taxon>
        <taxon>Primates</taxon>
        <taxon>Haplorrhini</taxon>
        <taxon>Catarrhini</taxon>
        <taxon>Hominidae</taxon>
        <taxon>Pan</taxon>
    </lineage>
</organism>
<protein>
    <recommendedName>
        <fullName>Interleukin-4</fullName>
        <shortName>IL-4</shortName>
    </recommendedName>
    <alternativeName>
        <fullName>B-cell stimulatory factor 1</fullName>
        <shortName>BSF-1</shortName>
    </alternativeName>
    <alternativeName>
        <fullName>Lymphocyte stimulatory factor 1</fullName>
    </alternativeName>
</protein>
<accession>Q8HYB1</accession>